<proteinExistence type="inferred from homology"/>
<protein>
    <recommendedName>
        <fullName evidence="1">1-deoxy-D-xylulose-5-phosphate synthase</fullName>
        <ecNumber evidence="1">2.2.1.7</ecNumber>
    </recommendedName>
    <alternativeName>
        <fullName evidence="1">1-deoxyxylulose-5-phosphate synthase</fullName>
        <shortName evidence="1">DXP synthase</shortName>
        <shortName evidence="1">DXPS</shortName>
    </alternativeName>
</protein>
<keyword id="KW-0414">Isoprene biosynthesis</keyword>
<keyword id="KW-0460">Magnesium</keyword>
<keyword id="KW-0479">Metal-binding</keyword>
<keyword id="KW-1185">Reference proteome</keyword>
<keyword id="KW-0784">Thiamine biosynthesis</keyword>
<keyword id="KW-0786">Thiamine pyrophosphate</keyword>
<keyword id="KW-0808">Transferase</keyword>
<comment type="function">
    <text evidence="1">Catalyzes the acyloin condensation reaction between C atoms 2 and 3 of pyruvate and glyceraldehyde 3-phosphate to yield 1-deoxy-D-xylulose-5-phosphate (DXP).</text>
</comment>
<comment type="catalytic activity">
    <reaction evidence="1">
        <text>D-glyceraldehyde 3-phosphate + pyruvate + H(+) = 1-deoxy-D-xylulose 5-phosphate + CO2</text>
        <dbReference type="Rhea" id="RHEA:12605"/>
        <dbReference type="ChEBI" id="CHEBI:15361"/>
        <dbReference type="ChEBI" id="CHEBI:15378"/>
        <dbReference type="ChEBI" id="CHEBI:16526"/>
        <dbReference type="ChEBI" id="CHEBI:57792"/>
        <dbReference type="ChEBI" id="CHEBI:59776"/>
        <dbReference type="EC" id="2.2.1.7"/>
    </reaction>
</comment>
<comment type="cofactor">
    <cofactor evidence="1">
        <name>Mg(2+)</name>
        <dbReference type="ChEBI" id="CHEBI:18420"/>
    </cofactor>
    <text evidence="1">Binds 1 Mg(2+) ion per subunit.</text>
</comment>
<comment type="cofactor">
    <cofactor evidence="1">
        <name>thiamine diphosphate</name>
        <dbReference type="ChEBI" id="CHEBI:58937"/>
    </cofactor>
    <text evidence="1">Binds 1 thiamine pyrophosphate per subunit.</text>
</comment>
<comment type="pathway">
    <text evidence="1">Metabolic intermediate biosynthesis; 1-deoxy-D-xylulose 5-phosphate biosynthesis; 1-deoxy-D-xylulose 5-phosphate from D-glyceraldehyde 3-phosphate and pyruvate: step 1/1.</text>
</comment>
<comment type="subunit">
    <text evidence="1">Homodimer.</text>
</comment>
<comment type="similarity">
    <text evidence="1">Belongs to the transketolase family. DXPS subfamily.</text>
</comment>
<dbReference type="EC" id="2.2.1.7" evidence="1"/>
<dbReference type="EMBL" id="CP000158">
    <property type="protein sequence ID" value="ABI76402.1"/>
    <property type="molecule type" value="Genomic_DNA"/>
</dbReference>
<dbReference type="RefSeq" id="WP_011646839.1">
    <property type="nucleotide sequence ID" value="NC_008358.1"/>
</dbReference>
<dbReference type="SMR" id="Q0C154"/>
<dbReference type="STRING" id="228405.HNE_1838"/>
<dbReference type="KEGG" id="hne:HNE_1838"/>
<dbReference type="eggNOG" id="COG1154">
    <property type="taxonomic scope" value="Bacteria"/>
</dbReference>
<dbReference type="HOGENOM" id="CLU_009227_1_4_5"/>
<dbReference type="UniPathway" id="UPA00064">
    <property type="reaction ID" value="UER00091"/>
</dbReference>
<dbReference type="Proteomes" id="UP000001959">
    <property type="component" value="Chromosome"/>
</dbReference>
<dbReference type="GO" id="GO:0008661">
    <property type="term" value="F:1-deoxy-D-xylulose-5-phosphate synthase activity"/>
    <property type="evidence" value="ECO:0007669"/>
    <property type="project" value="UniProtKB-UniRule"/>
</dbReference>
<dbReference type="GO" id="GO:0000287">
    <property type="term" value="F:magnesium ion binding"/>
    <property type="evidence" value="ECO:0007669"/>
    <property type="project" value="UniProtKB-UniRule"/>
</dbReference>
<dbReference type="GO" id="GO:0030976">
    <property type="term" value="F:thiamine pyrophosphate binding"/>
    <property type="evidence" value="ECO:0007669"/>
    <property type="project" value="UniProtKB-UniRule"/>
</dbReference>
<dbReference type="GO" id="GO:0052865">
    <property type="term" value="P:1-deoxy-D-xylulose 5-phosphate biosynthetic process"/>
    <property type="evidence" value="ECO:0007669"/>
    <property type="project" value="UniProtKB-UniPathway"/>
</dbReference>
<dbReference type="GO" id="GO:0019682">
    <property type="term" value="P:glyceraldehyde-3-phosphate metabolic process"/>
    <property type="evidence" value="ECO:0007669"/>
    <property type="project" value="UniProtKB-ARBA"/>
</dbReference>
<dbReference type="GO" id="GO:0016114">
    <property type="term" value="P:terpenoid biosynthetic process"/>
    <property type="evidence" value="ECO:0007669"/>
    <property type="project" value="UniProtKB-UniRule"/>
</dbReference>
<dbReference type="GO" id="GO:0009228">
    <property type="term" value="P:thiamine biosynthetic process"/>
    <property type="evidence" value="ECO:0007669"/>
    <property type="project" value="UniProtKB-UniRule"/>
</dbReference>
<dbReference type="CDD" id="cd02007">
    <property type="entry name" value="TPP_DXS"/>
    <property type="match status" value="1"/>
</dbReference>
<dbReference type="CDD" id="cd07033">
    <property type="entry name" value="TPP_PYR_DXS_TK_like"/>
    <property type="match status" value="1"/>
</dbReference>
<dbReference type="FunFam" id="3.40.50.920:FF:000002">
    <property type="entry name" value="1-deoxy-D-xylulose-5-phosphate synthase"/>
    <property type="match status" value="1"/>
</dbReference>
<dbReference type="FunFam" id="3.40.50.970:FF:000005">
    <property type="entry name" value="1-deoxy-D-xylulose-5-phosphate synthase"/>
    <property type="match status" value="1"/>
</dbReference>
<dbReference type="Gene3D" id="3.40.50.920">
    <property type="match status" value="1"/>
</dbReference>
<dbReference type="Gene3D" id="3.40.50.970">
    <property type="match status" value="2"/>
</dbReference>
<dbReference type="HAMAP" id="MF_00315">
    <property type="entry name" value="DXP_synth"/>
    <property type="match status" value="1"/>
</dbReference>
<dbReference type="InterPro" id="IPR005477">
    <property type="entry name" value="Dxylulose-5-P_synthase"/>
</dbReference>
<dbReference type="InterPro" id="IPR029061">
    <property type="entry name" value="THDP-binding"/>
</dbReference>
<dbReference type="InterPro" id="IPR009014">
    <property type="entry name" value="Transketo_C/PFOR_II"/>
</dbReference>
<dbReference type="InterPro" id="IPR005475">
    <property type="entry name" value="Transketolase-like_Pyr-bd"/>
</dbReference>
<dbReference type="InterPro" id="IPR020826">
    <property type="entry name" value="Transketolase_BS"/>
</dbReference>
<dbReference type="InterPro" id="IPR033248">
    <property type="entry name" value="Transketolase_C"/>
</dbReference>
<dbReference type="InterPro" id="IPR049557">
    <property type="entry name" value="Transketolase_CS"/>
</dbReference>
<dbReference type="NCBIfam" id="TIGR00204">
    <property type="entry name" value="dxs"/>
    <property type="match status" value="1"/>
</dbReference>
<dbReference type="NCBIfam" id="NF003933">
    <property type="entry name" value="PRK05444.2-2"/>
    <property type="match status" value="1"/>
</dbReference>
<dbReference type="PANTHER" id="PTHR43322">
    <property type="entry name" value="1-D-DEOXYXYLULOSE 5-PHOSPHATE SYNTHASE-RELATED"/>
    <property type="match status" value="1"/>
</dbReference>
<dbReference type="PANTHER" id="PTHR43322:SF5">
    <property type="entry name" value="1-DEOXY-D-XYLULOSE-5-PHOSPHATE SYNTHASE, CHLOROPLASTIC"/>
    <property type="match status" value="1"/>
</dbReference>
<dbReference type="Pfam" id="PF13292">
    <property type="entry name" value="DXP_synthase_N"/>
    <property type="match status" value="1"/>
</dbReference>
<dbReference type="Pfam" id="PF02779">
    <property type="entry name" value="Transket_pyr"/>
    <property type="match status" value="1"/>
</dbReference>
<dbReference type="Pfam" id="PF02780">
    <property type="entry name" value="Transketolase_C"/>
    <property type="match status" value="1"/>
</dbReference>
<dbReference type="SMART" id="SM00861">
    <property type="entry name" value="Transket_pyr"/>
    <property type="match status" value="1"/>
</dbReference>
<dbReference type="SUPFAM" id="SSF52518">
    <property type="entry name" value="Thiamin diphosphate-binding fold (THDP-binding)"/>
    <property type="match status" value="2"/>
</dbReference>
<dbReference type="SUPFAM" id="SSF52922">
    <property type="entry name" value="TK C-terminal domain-like"/>
    <property type="match status" value="1"/>
</dbReference>
<dbReference type="PROSITE" id="PS00801">
    <property type="entry name" value="TRANSKETOLASE_1"/>
    <property type="match status" value="1"/>
</dbReference>
<dbReference type="PROSITE" id="PS00802">
    <property type="entry name" value="TRANSKETOLASE_2"/>
    <property type="match status" value="1"/>
</dbReference>
<reference key="1">
    <citation type="journal article" date="2006" name="J. Bacteriol.">
        <title>Comparative genomic evidence for a close relationship between the dimorphic prosthecate bacteria Hyphomonas neptunium and Caulobacter crescentus.</title>
        <authorList>
            <person name="Badger J.H."/>
            <person name="Hoover T.R."/>
            <person name="Brun Y.V."/>
            <person name="Weiner R.M."/>
            <person name="Laub M.T."/>
            <person name="Alexandre G."/>
            <person name="Mrazek J."/>
            <person name="Ren Q."/>
            <person name="Paulsen I.T."/>
            <person name="Nelson K.E."/>
            <person name="Khouri H.M."/>
            <person name="Radune D."/>
            <person name="Sosa J."/>
            <person name="Dodson R.J."/>
            <person name="Sullivan S.A."/>
            <person name="Rosovitz M.J."/>
            <person name="Madupu R."/>
            <person name="Brinkac L.M."/>
            <person name="Durkin A.S."/>
            <person name="Daugherty S.C."/>
            <person name="Kothari S.P."/>
            <person name="Giglio M.G."/>
            <person name="Zhou L."/>
            <person name="Haft D.H."/>
            <person name="Selengut J.D."/>
            <person name="Davidsen T.M."/>
            <person name="Yang Q."/>
            <person name="Zafar N."/>
            <person name="Ward N.L."/>
        </authorList>
    </citation>
    <scope>NUCLEOTIDE SEQUENCE [LARGE SCALE GENOMIC DNA]</scope>
    <source>
        <strain>ATCC 15444</strain>
    </source>
</reference>
<accession>Q0C154</accession>
<sequence length="640" mass="68527">MTETRPNRLLDAIDTPSDLKGRSRADLKQIAAEVREEVVDVVSVTGGHLGSGLGVVELTVAIHSVFDTPDDKLVWDVGHQCYPHKILTGRKDRMRTLRQGGGLSGFTKRSESEYDPFGAAHASTSISAGLGFAKSRDLQNKDNHVICVIGDGSMSAGMAYEAMNNAGADRSRMIVILNDNDMSIAPPVGAMSHYFSRLVSSRPYRGLRRIAKKVVQPMGLESPARRAEEYLRGFAMGGTLFEEMGFYYIGPVDGHDLDTLLDLLENIKAMQDGPILLHVVTQKGKGYAPAENSADKYHGVSKFSVVTGEQAKGAGGPPSYQKVFGQTLAKLGETDDKICAITAAMPSGTSTDIFGKKFPDRHFDVGIAEQHAVTFAAGLAADGMKPFCAIYSTFLQRGYDQVVHDVAIQQLPVRFAIDRAGLVGADGATHAGSFDIGYLGALPGFVCMAPSDEAELARMVLTSLEIDDRPSAVRYPRGEGVGVVIPDLLKPLEIGKGRVVREGTSIAILSYGTRLQEALKAAEMLAAQGLSATVADARFAKPLDNELIERLAREHEVLVTIEEGSRGGFGSFVLEHLANCGGLDAGLKVRVMTLPDVFQDHDTPAAMYDQAGLTARHIAARAIEALGRGDLSAIERLASA</sequence>
<organism>
    <name type="scientific">Hyphomonas neptunium (strain ATCC 15444)</name>
    <dbReference type="NCBI Taxonomy" id="228405"/>
    <lineage>
        <taxon>Bacteria</taxon>
        <taxon>Pseudomonadati</taxon>
        <taxon>Pseudomonadota</taxon>
        <taxon>Alphaproteobacteria</taxon>
        <taxon>Hyphomonadales</taxon>
        <taxon>Hyphomonadaceae</taxon>
        <taxon>Hyphomonas</taxon>
    </lineage>
</organism>
<evidence type="ECO:0000255" key="1">
    <source>
        <dbReference type="HAMAP-Rule" id="MF_00315"/>
    </source>
</evidence>
<name>DXS_HYPNA</name>
<gene>
    <name evidence="1" type="primary">dxs</name>
    <name type="ordered locus">HNE_1838</name>
</gene>
<feature type="chain" id="PRO_1000019034" description="1-deoxy-D-xylulose-5-phosphate synthase">
    <location>
        <begin position="1"/>
        <end position="640"/>
    </location>
</feature>
<feature type="binding site" evidence="1">
    <location>
        <position position="79"/>
    </location>
    <ligand>
        <name>thiamine diphosphate</name>
        <dbReference type="ChEBI" id="CHEBI:58937"/>
    </ligand>
</feature>
<feature type="binding site" evidence="1">
    <location>
        <begin position="120"/>
        <end position="122"/>
    </location>
    <ligand>
        <name>thiamine diphosphate</name>
        <dbReference type="ChEBI" id="CHEBI:58937"/>
    </ligand>
</feature>
<feature type="binding site" evidence="1">
    <location>
        <position position="151"/>
    </location>
    <ligand>
        <name>Mg(2+)</name>
        <dbReference type="ChEBI" id="CHEBI:18420"/>
    </ligand>
</feature>
<feature type="binding site" evidence="1">
    <location>
        <begin position="152"/>
        <end position="153"/>
    </location>
    <ligand>
        <name>thiamine diphosphate</name>
        <dbReference type="ChEBI" id="CHEBI:58937"/>
    </ligand>
</feature>
<feature type="binding site" evidence="1">
    <location>
        <position position="180"/>
    </location>
    <ligand>
        <name>Mg(2+)</name>
        <dbReference type="ChEBI" id="CHEBI:18420"/>
    </ligand>
</feature>
<feature type="binding site" evidence="1">
    <location>
        <position position="180"/>
    </location>
    <ligand>
        <name>thiamine diphosphate</name>
        <dbReference type="ChEBI" id="CHEBI:58937"/>
    </ligand>
</feature>
<feature type="binding site" evidence="1">
    <location>
        <position position="287"/>
    </location>
    <ligand>
        <name>thiamine diphosphate</name>
        <dbReference type="ChEBI" id="CHEBI:58937"/>
    </ligand>
</feature>
<feature type="binding site" evidence="1">
    <location>
        <position position="369"/>
    </location>
    <ligand>
        <name>thiamine diphosphate</name>
        <dbReference type="ChEBI" id="CHEBI:58937"/>
    </ligand>
</feature>